<dbReference type="EMBL" id="M62730">
    <property type="protein sequence ID" value="AAA43829.1"/>
    <property type="molecule type" value="Genomic_RNA"/>
</dbReference>
<dbReference type="EMBL" id="EF630359">
    <property type="protein sequence ID" value="ABW25051.1"/>
    <property type="molecule type" value="Genomic_RNA"/>
</dbReference>
<dbReference type="EMBL" id="EF630360">
    <property type="protein sequence ID" value="ABW25057.1"/>
    <property type="molecule type" value="Genomic_RNA"/>
</dbReference>
<dbReference type="PIR" id="JQ1261">
    <property type="entry name" value="JQ1261"/>
</dbReference>
<dbReference type="RefSeq" id="NP_040991.1">
    <property type="nucleotide sequence ID" value="NC_001483.1"/>
</dbReference>
<dbReference type="GeneID" id="1494012"/>
<dbReference type="KEGG" id="vg:1494012"/>
<dbReference type="Proteomes" id="UP000008623">
    <property type="component" value="Genome"/>
</dbReference>
<dbReference type="GO" id="GO:0044167">
    <property type="term" value="C:host cell endoplasmic reticulum membrane"/>
    <property type="evidence" value="ECO:0007669"/>
    <property type="project" value="UniProtKB-SubCell"/>
</dbReference>
<dbReference type="GO" id="GO:0016020">
    <property type="term" value="C:membrane"/>
    <property type="evidence" value="ECO:0007669"/>
    <property type="project" value="UniProtKB-KW"/>
</dbReference>
<dbReference type="GO" id="GO:0046740">
    <property type="term" value="P:transport of virus in host, cell to cell"/>
    <property type="evidence" value="ECO:0007669"/>
    <property type="project" value="UniProtKB-KW"/>
</dbReference>
<dbReference type="InterPro" id="IPR003411">
    <property type="entry name" value="TGBp3"/>
</dbReference>
<dbReference type="Pfam" id="PF02495">
    <property type="entry name" value="TGBp3"/>
    <property type="match status" value="1"/>
</dbReference>
<evidence type="ECO:0000250" key="1"/>
<evidence type="ECO:0000255" key="2"/>
<evidence type="ECO:0000305" key="3"/>
<keyword id="KW-1038">Host endoplasmic reticulum</keyword>
<keyword id="KW-1043">Host membrane</keyword>
<keyword id="KW-0472">Membrane</keyword>
<keyword id="KW-1185">Reference proteome</keyword>
<keyword id="KW-0812">Transmembrane</keyword>
<keyword id="KW-1133">Transmembrane helix</keyword>
<keyword id="KW-0813">Transport</keyword>
<keyword id="KW-0916">Viral movement protein</keyword>
<reference key="1">
    <citation type="journal article" date="1991" name="J. Gen. Virol.">
        <title>The entire nucleotide sequence of foxtail mosaic virus RNA.</title>
        <authorList>
            <person name="Bancroft J.B."/>
            <person name="Rouleau M."/>
            <person name="Johnston R."/>
            <person name="Prins L."/>
            <person name="Mackie G.A."/>
        </authorList>
    </citation>
    <scope>NUCLEOTIDE SEQUENCE [GENOMIC RNA]</scope>
</reference>
<reference key="2">
    <citation type="journal article" date="2008" name="Arch. Virol.">
        <title>Revised sequence of foxtail mosaic virus reveals a triple gene block structure similar to potato virus X.</title>
        <authorList>
            <person name="Bruun-Rasmussen M."/>
            <person name="Madsen C.T."/>
            <person name="Johansen E."/>
            <person name="Albrechtsen M."/>
        </authorList>
    </citation>
    <scope>NUCLEOTIDE SEQUENCE [GENOMIC RNA]</scope>
</reference>
<reference key="3">
    <citation type="journal article" date="2005" name="Mol. Plant Microbe Interact.">
        <title>A new cell-to-cell transport model for Potexviruses.</title>
        <authorList>
            <person name="Verchot-Lubicz J."/>
        </authorList>
    </citation>
    <scope>REVIEW</scope>
</reference>
<comment type="function">
    <text evidence="1">Plays a role in viral cell-to-cell propagation, by facilitating genome transport to neighboring plant cells through plasmosdesmata. May induce the formation of granular vesicles derived from the Endoplasmic reticulum, which align on actin filaments (By similarity).</text>
</comment>
<comment type="subcellular location">
    <subcellularLocation>
        <location evidence="1">Host endoplasmic reticulum membrane</location>
    </subcellularLocation>
</comment>
<comment type="miscellaneous">
    <text>TGBp1, TGBp2 and TGBp3 seem to act together for cell-to-cell propagation. TGBp1 is the main movement protein that physically cross the plasmodesma with the viral genome. TGBp2 and TGBp3 would facilitate TGBp1 function.</text>
</comment>
<comment type="similarity">
    <text evidence="3">Belongs to the Tymovirales TGBp3 protein family.</text>
</comment>
<organism>
    <name type="scientific">Foxtail mosaic virus</name>
    <dbReference type="NCBI Taxonomy" id="12179"/>
    <lineage>
        <taxon>Viruses</taxon>
        <taxon>Riboviria</taxon>
        <taxon>Orthornavirae</taxon>
        <taxon>Kitrinoviricota</taxon>
        <taxon>Alsuviricetes</taxon>
        <taxon>Tymovirales</taxon>
        <taxon>Alphaflexiviridae</taxon>
        <taxon>Potexvirus</taxon>
    </lineage>
</organism>
<sequence>MHESHLVVILALLLLALWCLSTRPVQPSCHVEINGHSIIVTGNCWHSTQRPH</sequence>
<protein>
    <recommendedName>
        <fullName>Movement protein TGBp3</fullName>
    </recommendedName>
    <alternativeName>
        <fullName>7 kDa protein</fullName>
    </alternativeName>
    <alternativeName>
        <fullName>Triple gene block 3 protein</fullName>
        <shortName>TGBp3</shortName>
    </alternativeName>
</protein>
<proteinExistence type="inferred from homology"/>
<feature type="chain" id="PRO_0000222602" description="Movement protein TGBp3">
    <location>
        <begin position="1"/>
        <end position="52"/>
    </location>
</feature>
<feature type="topological domain" description="Lumenal" evidence="2">
    <location>
        <begin position="1"/>
        <end position="3"/>
    </location>
</feature>
<feature type="transmembrane region" description="Helical" evidence="2">
    <location>
        <begin position="4"/>
        <end position="21"/>
    </location>
</feature>
<feature type="topological domain" description="Cytoplasmic" evidence="2">
    <location>
        <begin position="22"/>
        <end position="52"/>
    </location>
</feature>
<feature type="sequence conflict" description="In Ref. 1; AAA43829." evidence="3" ref="1">
    <original>L</original>
    <variation>I</variation>
    <location>
        <position position="15"/>
    </location>
</feature>
<organismHost>
    <name type="scientific">Setaria italica</name>
    <name type="common">Foxtail millet</name>
    <name type="synonym">Panicum italicum</name>
    <dbReference type="NCBI Taxonomy" id="4555"/>
</organismHost>
<organismHost>
    <name type="scientific">Setaria viridis</name>
    <name type="common">Green bristlegrass</name>
    <name type="synonym">Setaria italica subsp. viridis</name>
    <dbReference type="NCBI Taxonomy" id="4556"/>
</organismHost>
<accession>P22171</accession>
<accession>B1NLP7</accession>
<name>TGB3_FXMV</name>
<gene>
    <name type="ORF">ORF4</name>
</gene>